<name>TSAP1_PONAB</name>
<sequence length="287" mass="32527">MAASLWMGDLEPYMDENFISRAFATMGETVMSVKIIRNRLTGIPAGYCFVEFADLATAEKCLHKINGKPLPGATPAKRFKLNYVTYGKQPDNSPEYSLFVGDLTPDVDDGMLYEFFVKVYPSCRGGKVVLDQTGVSKGYGFVKFTDELEQKRALTECQGAVGLGSKPVRLSVAIPKASRVKPVEYSQMYSYSYNQYYQQYQNYYAQWGYDQNTGSYSYSYPQYGYTQSTMQTYEEVGDDALEDPMPQLDVTEANKEFMEQSEELYDALMDCHWQPLDTVSSEIPAMM</sequence>
<reference key="1">
    <citation type="submission" date="2004-11" db="EMBL/GenBank/DDBJ databases">
        <authorList>
            <consortium name="The German cDNA consortium"/>
        </authorList>
    </citation>
    <scope>NUCLEOTIDE SEQUENCE [LARGE SCALE MRNA]</scope>
    <source>
        <tissue>Brain cortex</tissue>
    </source>
</reference>
<keyword id="KW-0963">Cytoplasm</keyword>
<keyword id="KW-0539">Nucleus</keyword>
<keyword id="KW-0648">Protein biosynthesis</keyword>
<keyword id="KW-1185">Reference proteome</keyword>
<keyword id="KW-0677">Repeat</keyword>
<keyword id="KW-0694">RNA-binding</keyword>
<organism>
    <name type="scientific">Pongo abelii</name>
    <name type="common">Sumatran orangutan</name>
    <name type="synonym">Pongo pygmaeus abelii</name>
    <dbReference type="NCBI Taxonomy" id="9601"/>
    <lineage>
        <taxon>Eukaryota</taxon>
        <taxon>Metazoa</taxon>
        <taxon>Chordata</taxon>
        <taxon>Craniata</taxon>
        <taxon>Vertebrata</taxon>
        <taxon>Euteleostomi</taxon>
        <taxon>Mammalia</taxon>
        <taxon>Eutheria</taxon>
        <taxon>Euarchontoglires</taxon>
        <taxon>Primates</taxon>
        <taxon>Haplorrhini</taxon>
        <taxon>Catarrhini</taxon>
        <taxon>Hominidae</taxon>
        <taxon>Pongo</taxon>
    </lineage>
</organism>
<accession>Q5R462</accession>
<evidence type="ECO:0000250" key="1"/>
<evidence type="ECO:0000255" key="2">
    <source>
        <dbReference type="PROSITE-ProRule" id="PRU00176"/>
    </source>
</evidence>
<evidence type="ECO:0000305" key="3"/>
<dbReference type="EMBL" id="CR861396">
    <property type="protein sequence ID" value="CAH93454.1"/>
    <property type="molecule type" value="mRNA"/>
</dbReference>
<dbReference type="RefSeq" id="NP_001127022.1">
    <property type="nucleotide sequence ID" value="NM_001133550.1"/>
</dbReference>
<dbReference type="SMR" id="Q5R462"/>
<dbReference type="FunCoup" id="Q5R462">
    <property type="interactions" value="3072"/>
</dbReference>
<dbReference type="STRING" id="9601.ENSPPYP00000001893"/>
<dbReference type="GeneID" id="100174047"/>
<dbReference type="KEGG" id="pon:100174047"/>
<dbReference type="CTD" id="54952"/>
<dbReference type="InParanoid" id="Q5R462"/>
<dbReference type="OrthoDB" id="446113at2759"/>
<dbReference type="Proteomes" id="UP000001595">
    <property type="component" value="Unplaced"/>
</dbReference>
<dbReference type="GO" id="GO:0005737">
    <property type="term" value="C:cytoplasm"/>
    <property type="evidence" value="ECO:0007669"/>
    <property type="project" value="UniProtKB-SubCell"/>
</dbReference>
<dbReference type="GO" id="GO:0005634">
    <property type="term" value="C:nucleus"/>
    <property type="evidence" value="ECO:0007669"/>
    <property type="project" value="UniProtKB-SubCell"/>
</dbReference>
<dbReference type="GO" id="GO:0000049">
    <property type="term" value="F:tRNA binding"/>
    <property type="evidence" value="ECO:0007669"/>
    <property type="project" value="TreeGrafter"/>
</dbReference>
<dbReference type="GO" id="GO:0001514">
    <property type="term" value="P:selenocysteine incorporation"/>
    <property type="evidence" value="ECO:0007669"/>
    <property type="project" value="TreeGrafter"/>
</dbReference>
<dbReference type="CDD" id="cd12610">
    <property type="entry name" value="RRM1_SECp43"/>
    <property type="match status" value="1"/>
</dbReference>
<dbReference type="CDD" id="cd12612">
    <property type="entry name" value="RRM2_SECp43"/>
    <property type="match status" value="1"/>
</dbReference>
<dbReference type="FunFam" id="3.30.70.330:FF:000166">
    <property type="entry name" value="Trna selenocysteine 1-associated protein 1"/>
    <property type="match status" value="1"/>
</dbReference>
<dbReference type="FunFam" id="3.30.70.330:FF:000159">
    <property type="entry name" value="tRNA selenocysteine 1-associated protein 1"/>
    <property type="match status" value="1"/>
</dbReference>
<dbReference type="Gene3D" id="3.30.70.330">
    <property type="match status" value="2"/>
</dbReference>
<dbReference type="InterPro" id="IPR012677">
    <property type="entry name" value="Nucleotide-bd_a/b_plait_sf"/>
</dbReference>
<dbReference type="InterPro" id="IPR035979">
    <property type="entry name" value="RBD_domain_sf"/>
</dbReference>
<dbReference type="InterPro" id="IPR000504">
    <property type="entry name" value="RRM_dom"/>
</dbReference>
<dbReference type="InterPro" id="IPR034510">
    <property type="entry name" value="SECp43_RRM2"/>
</dbReference>
<dbReference type="InterPro" id="IPR040434">
    <property type="entry name" value="TSAP1"/>
</dbReference>
<dbReference type="InterPro" id="IPR041085">
    <property type="entry name" value="TSAP1_C"/>
</dbReference>
<dbReference type="PANTHER" id="PTHR37457:SF2">
    <property type="entry name" value="TRNA SELENOCYSTEINE 1-ASSOCIATED PROTEIN 1"/>
    <property type="match status" value="1"/>
</dbReference>
<dbReference type="PANTHER" id="PTHR37457">
    <property type="entry name" value="TRNA SELENOCYSTEINE 1-ASSOCIATED PROTEIN 1-RELATED"/>
    <property type="match status" value="1"/>
</dbReference>
<dbReference type="Pfam" id="PF00076">
    <property type="entry name" value="RRM_1"/>
    <property type="match status" value="2"/>
</dbReference>
<dbReference type="Pfam" id="PF17654">
    <property type="entry name" value="Trnau1ap"/>
    <property type="match status" value="1"/>
</dbReference>
<dbReference type="SMART" id="SM00360">
    <property type="entry name" value="RRM"/>
    <property type="match status" value="2"/>
</dbReference>
<dbReference type="SUPFAM" id="SSF54928">
    <property type="entry name" value="RNA-binding domain, RBD"/>
    <property type="match status" value="1"/>
</dbReference>
<dbReference type="PROSITE" id="PS50102">
    <property type="entry name" value="RRM"/>
    <property type="match status" value="2"/>
</dbReference>
<protein>
    <recommendedName>
        <fullName>tRNA selenocysteine 1-associated protein 1</fullName>
    </recommendedName>
    <alternativeName>
        <fullName>tRNA selenocysteine-associated protein 1</fullName>
    </alternativeName>
</protein>
<feature type="chain" id="PRO_0000304919" description="tRNA selenocysteine 1-associated protein 1">
    <location>
        <begin position="1"/>
        <end position="287"/>
    </location>
</feature>
<feature type="domain" description="RRM 1" evidence="2">
    <location>
        <begin position="3"/>
        <end position="86"/>
    </location>
</feature>
<feature type="domain" description="RRM 2" evidence="2">
    <location>
        <begin position="96"/>
        <end position="175"/>
    </location>
</feature>
<gene>
    <name type="primary">TRNAU1AP</name>
    <name type="synonym">TRSPAP1</name>
</gene>
<comment type="function">
    <text evidence="1">Involved in the early steps of selenocysteine biosynthesis and tRNA(Sec) charging to the later steps resulting in the cotranslational incorporation of selenocysteine into selenoproteins. Stabilizes the SECISBP2, EEFSEC and tRNA(Sec) complex. May be involved in the methylation of tRNA(Sec). Enhances efficiency of selenoproteins synthesis (By similarity).</text>
</comment>
<comment type="subunit">
    <text evidence="1">Component of the tRNA(Sec) complex composed at least of EEFSEC, SECISBP2, SEPHS1, SEPSECS, TRNAU1AP and tRNA(Sec). Found in a complex with tRNA(Sec). Interacts with SEPSECS. Associates with mRNP and/or polysomes. Found in a complex with EEFSEC, SECISBP2, TRNAU1AP and tRNA(Sec) (By similarity).</text>
</comment>
<comment type="subcellular location">
    <subcellularLocation>
        <location evidence="1">Nucleus</location>
    </subcellularLocation>
    <subcellularLocation>
        <location evidence="1">Cytoplasm</location>
    </subcellularLocation>
    <text evidence="1">Abundant in the nucleus.</text>
</comment>
<comment type="similarity">
    <text evidence="3">Belongs to the RRM TRSPAP family.</text>
</comment>
<proteinExistence type="evidence at transcript level"/>